<gene>
    <name type="primary">lepB</name>
    <name type="ordered locus">RC0156</name>
</gene>
<name>LEP_RICCN</name>
<sequence length="266" mass="31140">MQTDNTKSNTNKTAKQEWGSFAFVICIALLIRILIMEPFNVPTGSMKATILENDYIFSTKYSYGYSNYSLSFFDFIPLFKGRIFAREPDRGDIVVFRPPNDMSVRYIKRLIGLPGDKIQLIDDVIYINDKKIERTEVGTYISEEGIKYLKFKETLPNGRTYFSYKLAPIYGVIYNDRYSNTDVFYVPEGQYFFLGDNRDQSNDSRVNLGFVPFENFIAKAQFIWFSTKITWWDNDIGVINLVLKLKPWIESVRLNRIFRNLYNTDA</sequence>
<comment type="catalytic activity">
    <reaction>
        <text>Cleavage of hydrophobic, N-terminal signal or leader sequences from secreted and periplasmic proteins.</text>
        <dbReference type="EC" id="3.4.21.89"/>
    </reaction>
</comment>
<comment type="subcellular location">
    <subcellularLocation>
        <location evidence="3">Cell membrane</location>
        <topology evidence="3">Single-pass type II membrane protein</topology>
    </subcellularLocation>
</comment>
<comment type="similarity">
    <text evidence="3">Belongs to the peptidase S26 family.</text>
</comment>
<proteinExistence type="inferred from homology"/>
<reference key="1">
    <citation type="journal article" date="2001" name="Science">
        <title>Mechanisms of evolution in Rickettsia conorii and R. prowazekii.</title>
        <authorList>
            <person name="Ogata H."/>
            <person name="Audic S."/>
            <person name="Renesto-Audiffren P."/>
            <person name="Fournier P.-E."/>
            <person name="Barbe V."/>
            <person name="Samson D."/>
            <person name="Roux V."/>
            <person name="Cossart P."/>
            <person name="Weissenbach J."/>
            <person name="Claverie J.-M."/>
            <person name="Raoult D."/>
        </authorList>
    </citation>
    <scope>NUCLEOTIDE SEQUENCE [LARGE SCALE GENOMIC DNA]</scope>
    <source>
        <strain>ATCC VR-613 / Malish 7</strain>
    </source>
</reference>
<protein>
    <recommendedName>
        <fullName>Signal peptidase I</fullName>
        <shortName>SPase I</shortName>
        <ecNumber>3.4.21.89</ecNumber>
    </recommendedName>
    <alternativeName>
        <fullName>Leader peptidase I</fullName>
    </alternativeName>
</protein>
<accession>Q92JB1</accession>
<keyword id="KW-1003">Cell membrane</keyword>
<keyword id="KW-0378">Hydrolase</keyword>
<keyword id="KW-0472">Membrane</keyword>
<keyword id="KW-0645">Protease</keyword>
<keyword id="KW-0812">Transmembrane</keyword>
<keyword id="KW-1133">Transmembrane helix</keyword>
<dbReference type="EC" id="3.4.21.89"/>
<dbReference type="EMBL" id="AE006914">
    <property type="protein sequence ID" value="AAL02694.1"/>
    <property type="molecule type" value="Genomic_DNA"/>
</dbReference>
<dbReference type="PIR" id="D97719">
    <property type="entry name" value="D97719"/>
</dbReference>
<dbReference type="RefSeq" id="WP_010976832.1">
    <property type="nucleotide sequence ID" value="NC_003103.1"/>
</dbReference>
<dbReference type="SMR" id="Q92JB1"/>
<dbReference type="MEROPS" id="S26.001"/>
<dbReference type="GeneID" id="928036"/>
<dbReference type="KEGG" id="rco:RC0156"/>
<dbReference type="PATRIC" id="fig|272944.4.peg.185"/>
<dbReference type="HOGENOM" id="CLU_028723_1_2_5"/>
<dbReference type="Proteomes" id="UP000000816">
    <property type="component" value="Chromosome"/>
</dbReference>
<dbReference type="GO" id="GO:0005886">
    <property type="term" value="C:plasma membrane"/>
    <property type="evidence" value="ECO:0007669"/>
    <property type="project" value="UniProtKB-SubCell"/>
</dbReference>
<dbReference type="GO" id="GO:0004252">
    <property type="term" value="F:serine-type endopeptidase activity"/>
    <property type="evidence" value="ECO:0007669"/>
    <property type="project" value="UniProtKB-EC"/>
</dbReference>
<dbReference type="GO" id="GO:0006465">
    <property type="term" value="P:signal peptide processing"/>
    <property type="evidence" value="ECO:0007669"/>
    <property type="project" value="InterPro"/>
</dbReference>
<dbReference type="CDD" id="cd06530">
    <property type="entry name" value="S26_SPase_I"/>
    <property type="match status" value="1"/>
</dbReference>
<dbReference type="Gene3D" id="2.10.109.10">
    <property type="entry name" value="Umud Fragment, subunit A"/>
    <property type="match status" value="1"/>
</dbReference>
<dbReference type="InterPro" id="IPR036286">
    <property type="entry name" value="LexA/Signal_pep-like_sf"/>
</dbReference>
<dbReference type="InterPro" id="IPR000223">
    <property type="entry name" value="Pept_S26A_signal_pept_1"/>
</dbReference>
<dbReference type="InterPro" id="IPR019758">
    <property type="entry name" value="Pept_S26A_signal_pept_1_CS"/>
</dbReference>
<dbReference type="InterPro" id="IPR019757">
    <property type="entry name" value="Pept_S26A_signal_pept_1_Lys-AS"/>
</dbReference>
<dbReference type="InterPro" id="IPR019533">
    <property type="entry name" value="Peptidase_S26"/>
</dbReference>
<dbReference type="NCBIfam" id="TIGR02227">
    <property type="entry name" value="sigpep_I_bact"/>
    <property type="match status" value="1"/>
</dbReference>
<dbReference type="PANTHER" id="PTHR43390:SF1">
    <property type="entry name" value="CHLOROPLAST PROCESSING PEPTIDASE"/>
    <property type="match status" value="1"/>
</dbReference>
<dbReference type="PANTHER" id="PTHR43390">
    <property type="entry name" value="SIGNAL PEPTIDASE I"/>
    <property type="match status" value="1"/>
</dbReference>
<dbReference type="Pfam" id="PF10502">
    <property type="entry name" value="Peptidase_S26"/>
    <property type="match status" value="1"/>
</dbReference>
<dbReference type="PRINTS" id="PR00727">
    <property type="entry name" value="LEADERPTASE"/>
</dbReference>
<dbReference type="SUPFAM" id="SSF51306">
    <property type="entry name" value="LexA/Signal peptidase"/>
    <property type="match status" value="1"/>
</dbReference>
<dbReference type="PROSITE" id="PS00760">
    <property type="entry name" value="SPASE_I_2"/>
    <property type="match status" value="1"/>
</dbReference>
<dbReference type="PROSITE" id="PS00761">
    <property type="entry name" value="SPASE_I_3"/>
    <property type="match status" value="1"/>
</dbReference>
<evidence type="ECO:0000250" key="1"/>
<evidence type="ECO:0000255" key="2"/>
<evidence type="ECO:0000305" key="3"/>
<organism>
    <name type="scientific">Rickettsia conorii (strain ATCC VR-613 / Malish 7)</name>
    <dbReference type="NCBI Taxonomy" id="272944"/>
    <lineage>
        <taxon>Bacteria</taxon>
        <taxon>Pseudomonadati</taxon>
        <taxon>Pseudomonadota</taxon>
        <taxon>Alphaproteobacteria</taxon>
        <taxon>Rickettsiales</taxon>
        <taxon>Rickettsiaceae</taxon>
        <taxon>Rickettsieae</taxon>
        <taxon>Rickettsia</taxon>
        <taxon>spotted fever group</taxon>
    </lineage>
</organism>
<feature type="chain" id="PRO_0000109515" description="Signal peptidase I">
    <location>
        <begin position="1"/>
        <end position="266"/>
    </location>
</feature>
<feature type="topological domain" description="Cytoplasmic" evidence="2">
    <location>
        <begin position="1"/>
        <end position="20"/>
    </location>
</feature>
<feature type="transmembrane region" description="Helical" evidence="2">
    <location>
        <begin position="21"/>
        <end position="41"/>
    </location>
</feature>
<feature type="topological domain" description="Extracellular" evidence="2">
    <location>
        <begin position="42"/>
        <end position="266"/>
    </location>
</feature>
<feature type="active site" evidence="1">
    <location>
        <position position="45"/>
    </location>
</feature>
<feature type="active site" evidence="1">
    <location>
        <position position="108"/>
    </location>
</feature>